<name>SLD5_YARLI</name>
<dbReference type="EMBL" id="CR382128">
    <property type="protein sequence ID" value="CAG83285.1"/>
    <property type="molecule type" value="Genomic_DNA"/>
</dbReference>
<dbReference type="RefSeq" id="XP_501032.1">
    <property type="nucleotide sequence ID" value="XM_501032.1"/>
</dbReference>
<dbReference type="SMR" id="Q6CE80"/>
<dbReference type="FunCoup" id="Q6CE80">
    <property type="interactions" value="664"/>
</dbReference>
<dbReference type="STRING" id="284591.Q6CE80"/>
<dbReference type="EnsemblFungi" id="CAG83285">
    <property type="protein sequence ID" value="CAG83285"/>
    <property type="gene ID" value="YALI0_B17820g"/>
</dbReference>
<dbReference type="KEGG" id="yli:2907214"/>
<dbReference type="VEuPathDB" id="FungiDB:YALI0_B17820g"/>
<dbReference type="HOGENOM" id="CLU_071893_2_0_1"/>
<dbReference type="InParanoid" id="Q6CE80"/>
<dbReference type="OMA" id="ILETAWI"/>
<dbReference type="OrthoDB" id="19074at4891"/>
<dbReference type="Proteomes" id="UP000001300">
    <property type="component" value="Chromosome B"/>
</dbReference>
<dbReference type="GO" id="GO:0000811">
    <property type="term" value="C:GINS complex"/>
    <property type="evidence" value="ECO:0000318"/>
    <property type="project" value="GO_Central"/>
</dbReference>
<dbReference type="GO" id="GO:0007059">
    <property type="term" value="P:chromosome segregation"/>
    <property type="evidence" value="ECO:0007669"/>
    <property type="project" value="UniProtKB-KW"/>
</dbReference>
<dbReference type="GO" id="GO:0006261">
    <property type="term" value="P:DNA-templated DNA replication"/>
    <property type="evidence" value="ECO:0007669"/>
    <property type="project" value="InterPro"/>
</dbReference>
<dbReference type="GO" id="GO:0000727">
    <property type="term" value="P:double-strand break repair via break-induced replication"/>
    <property type="evidence" value="ECO:0000318"/>
    <property type="project" value="GO_Central"/>
</dbReference>
<dbReference type="CDD" id="cd11711">
    <property type="entry name" value="GINS_A_Sld5"/>
    <property type="match status" value="1"/>
</dbReference>
<dbReference type="CDD" id="cd21692">
    <property type="entry name" value="GINS_B_Sld5"/>
    <property type="match status" value="1"/>
</dbReference>
<dbReference type="Gene3D" id="1.20.58.1030">
    <property type="match status" value="1"/>
</dbReference>
<dbReference type="Gene3D" id="3.40.5.60">
    <property type="match status" value="1"/>
</dbReference>
<dbReference type="InterPro" id="IPR021151">
    <property type="entry name" value="GINS_A"/>
</dbReference>
<dbReference type="InterPro" id="IPR036224">
    <property type="entry name" value="GINS_bundle-like_dom_sf"/>
</dbReference>
<dbReference type="InterPro" id="IPR008591">
    <property type="entry name" value="GINS_Sld5"/>
</dbReference>
<dbReference type="InterPro" id="IPR031633">
    <property type="entry name" value="SLD5_C"/>
</dbReference>
<dbReference type="InterPro" id="IPR038749">
    <property type="entry name" value="Sld5_GINS_A"/>
</dbReference>
<dbReference type="PANTHER" id="PTHR21206:SF0">
    <property type="entry name" value="DNA REPLICATION COMPLEX GINS PROTEIN SLD5"/>
    <property type="match status" value="1"/>
</dbReference>
<dbReference type="PANTHER" id="PTHR21206">
    <property type="entry name" value="SLD5 PROTEIN"/>
    <property type="match status" value="1"/>
</dbReference>
<dbReference type="Pfam" id="PF05916">
    <property type="entry name" value="Sld5"/>
    <property type="match status" value="1"/>
</dbReference>
<dbReference type="Pfam" id="PF16922">
    <property type="entry name" value="SLD5_C"/>
    <property type="match status" value="1"/>
</dbReference>
<dbReference type="SUPFAM" id="SSF158573">
    <property type="entry name" value="GINS helical bundle-like"/>
    <property type="match status" value="1"/>
</dbReference>
<dbReference type="SUPFAM" id="SSF160059">
    <property type="entry name" value="PriA/YqbF domain"/>
    <property type="match status" value="1"/>
</dbReference>
<organism>
    <name type="scientific">Yarrowia lipolytica (strain CLIB 122 / E 150)</name>
    <name type="common">Yeast</name>
    <name type="synonym">Candida lipolytica</name>
    <dbReference type="NCBI Taxonomy" id="284591"/>
    <lineage>
        <taxon>Eukaryota</taxon>
        <taxon>Fungi</taxon>
        <taxon>Dikarya</taxon>
        <taxon>Ascomycota</taxon>
        <taxon>Saccharomycotina</taxon>
        <taxon>Dipodascomycetes</taxon>
        <taxon>Dipodascales</taxon>
        <taxon>Dipodascales incertae sedis</taxon>
        <taxon>Yarrowia</taxon>
    </lineage>
</organism>
<proteinExistence type="inferred from homology"/>
<comment type="function">
    <text evidence="1">The GINS complex plays an essential role in the initiation of DNA replication. Has a role in chromosome segregation (By similarity).</text>
</comment>
<comment type="subunit">
    <text evidence="1">Component of the GINS complex which is a heterotetramer of SLD5, PSF1, PSF2 and PSF3.</text>
</comment>
<comment type="subcellular location">
    <subcellularLocation>
        <location evidence="1">Nucleus</location>
    </subcellularLocation>
</comment>
<comment type="similarity">
    <text evidence="3">Belongs to the GINS4/SLD5 family.</text>
</comment>
<evidence type="ECO:0000250" key="1"/>
<evidence type="ECO:0000256" key="2">
    <source>
        <dbReference type="SAM" id="MobiDB-lite"/>
    </source>
</evidence>
<evidence type="ECO:0000305" key="3"/>
<keyword id="KW-0159">Chromosome partition</keyword>
<keyword id="KW-0235">DNA replication</keyword>
<keyword id="KW-0539">Nucleus</keyword>
<keyword id="KW-1185">Reference proteome</keyword>
<sequence length="260" mass="29943">MEEDNLDLEGMDIHSGLDSSFHSPPHTSDPAGLSMDETDDIDDLINNVRPHDPLGTLEEKEADIKELTHSWVTERMSPTLLPTKEALLFRILKRVQLQIEVIEEKSIDMSPDTDVKLELLIVETELERIKYLIRSYLRVRLLKIDNSMEYYQSSPLDRMNMSQTERMYLNRHYALLKNLYAHQFMNTFPDSLKQMNDSSGSASMVQEPNMDHPVFVRVVKDTGRKIIIGNDSVKLRKGSIVVIKYSIIVKYVESGDVVFI</sequence>
<feature type="chain" id="PRO_0000255435" description="DNA replication complex GINS protein SLD5">
    <location>
        <begin position="1"/>
        <end position="260"/>
    </location>
</feature>
<feature type="region of interest" description="Disordered" evidence="2">
    <location>
        <begin position="1"/>
        <end position="33"/>
    </location>
</feature>
<feature type="compositionally biased region" description="Acidic residues" evidence="2">
    <location>
        <begin position="1"/>
        <end position="10"/>
    </location>
</feature>
<feature type="compositionally biased region" description="Polar residues" evidence="2">
    <location>
        <begin position="17"/>
        <end position="26"/>
    </location>
</feature>
<gene>
    <name type="primary">SLD5</name>
    <name type="synonym">TSR3</name>
    <name type="ordered locus">YALI0B17820g</name>
</gene>
<reference key="1">
    <citation type="journal article" date="2004" name="Nature">
        <title>Genome evolution in yeasts.</title>
        <authorList>
            <person name="Dujon B."/>
            <person name="Sherman D."/>
            <person name="Fischer G."/>
            <person name="Durrens P."/>
            <person name="Casaregola S."/>
            <person name="Lafontaine I."/>
            <person name="de Montigny J."/>
            <person name="Marck C."/>
            <person name="Neuveglise C."/>
            <person name="Talla E."/>
            <person name="Goffard N."/>
            <person name="Frangeul L."/>
            <person name="Aigle M."/>
            <person name="Anthouard V."/>
            <person name="Babour A."/>
            <person name="Barbe V."/>
            <person name="Barnay S."/>
            <person name="Blanchin S."/>
            <person name="Beckerich J.-M."/>
            <person name="Beyne E."/>
            <person name="Bleykasten C."/>
            <person name="Boisrame A."/>
            <person name="Boyer J."/>
            <person name="Cattolico L."/>
            <person name="Confanioleri F."/>
            <person name="de Daruvar A."/>
            <person name="Despons L."/>
            <person name="Fabre E."/>
            <person name="Fairhead C."/>
            <person name="Ferry-Dumazet H."/>
            <person name="Groppi A."/>
            <person name="Hantraye F."/>
            <person name="Hennequin C."/>
            <person name="Jauniaux N."/>
            <person name="Joyet P."/>
            <person name="Kachouri R."/>
            <person name="Kerrest A."/>
            <person name="Koszul R."/>
            <person name="Lemaire M."/>
            <person name="Lesur I."/>
            <person name="Ma L."/>
            <person name="Muller H."/>
            <person name="Nicaud J.-M."/>
            <person name="Nikolski M."/>
            <person name="Oztas S."/>
            <person name="Ozier-Kalogeropoulos O."/>
            <person name="Pellenz S."/>
            <person name="Potier S."/>
            <person name="Richard G.-F."/>
            <person name="Straub M.-L."/>
            <person name="Suleau A."/>
            <person name="Swennen D."/>
            <person name="Tekaia F."/>
            <person name="Wesolowski-Louvel M."/>
            <person name="Westhof E."/>
            <person name="Wirth B."/>
            <person name="Zeniou-Meyer M."/>
            <person name="Zivanovic Y."/>
            <person name="Bolotin-Fukuhara M."/>
            <person name="Thierry A."/>
            <person name="Bouchier C."/>
            <person name="Caudron B."/>
            <person name="Scarpelli C."/>
            <person name="Gaillardin C."/>
            <person name="Weissenbach J."/>
            <person name="Wincker P."/>
            <person name="Souciet J.-L."/>
        </authorList>
    </citation>
    <scope>NUCLEOTIDE SEQUENCE [LARGE SCALE GENOMIC DNA]</scope>
    <source>
        <strain>CLIB 122 / E 150</strain>
    </source>
</reference>
<accession>Q6CE80</accession>
<protein>
    <recommendedName>
        <fullName>DNA replication complex GINS protein SLD5</fullName>
    </recommendedName>
</protein>